<name>YNEF_BACSU</name>
<proteinExistence type="inferred from homology"/>
<dbReference type="EMBL" id="X87845">
    <property type="protein sequence ID" value="CAA61115.1"/>
    <property type="molecule type" value="Genomic_DNA"/>
</dbReference>
<dbReference type="EMBL" id="Z73234">
    <property type="protein sequence ID" value="CAA97618.1"/>
    <property type="molecule type" value="Genomic_DNA"/>
</dbReference>
<dbReference type="EMBL" id="AL009126">
    <property type="protein sequence ID" value="CAB13675.1"/>
    <property type="molecule type" value="Genomic_DNA"/>
</dbReference>
<dbReference type="PIR" id="S57403">
    <property type="entry name" value="S57403"/>
</dbReference>
<dbReference type="RefSeq" id="NP_389674.1">
    <property type="nucleotide sequence ID" value="NC_000964.3"/>
</dbReference>
<dbReference type="RefSeq" id="WP_003221221.1">
    <property type="nucleotide sequence ID" value="NZ_OZ025638.1"/>
</dbReference>
<dbReference type="SMR" id="P45708"/>
<dbReference type="FunCoup" id="P45708">
    <property type="interactions" value="13"/>
</dbReference>
<dbReference type="STRING" id="224308.BSU17910"/>
<dbReference type="PaxDb" id="224308-BSU17910"/>
<dbReference type="DNASU" id="939469"/>
<dbReference type="EnsemblBacteria" id="CAB13675">
    <property type="protein sequence ID" value="CAB13675"/>
    <property type="gene ID" value="BSU_17910"/>
</dbReference>
<dbReference type="GeneID" id="939469"/>
<dbReference type="KEGG" id="bsu:BSU17910"/>
<dbReference type="PATRIC" id="fig|224308.179.peg.1952"/>
<dbReference type="eggNOG" id="COG3763">
    <property type="taxonomic scope" value="Bacteria"/>
</dbReference>
<dbReference type="InParanoid" id="P45708"/>
<dbReference type="PhylomeDB" id="P45708"/>
<dbReference type="BioCyc" id="BSUB:BSU17910-MONOMER"/>
<dbReference type="PRO" id="PR:P45708"/>
<dbReference type="Proteomes" id="UP000001570">
    <property type="component" value="Chromosome"/>
</dbReference>
<dbReference type="GO" id="GO:0005886">
    <property type="term" value="C:plasma membrane"/>
    <property type="evidence" value="ECO:0007669"/>
    <property type="project" value="UniProtKB-UniRule"/>
</dbReference>
<dbReference type="HAMAP" id="MF_00363">
    <property type="entry name" value="UPF0154"/>
    <property type="match status" value="1"/>
</dbReference>
<dbReference type="InterPro" id="IPR005359">
    <property type="entry name" value="UPF0154"/>
</dbReference>
<dbReference type="NCBIfam" id="NF002503">
    <property type="entry name" value="PRK01844.1"/>
    <property type="match status" value="1"/>
</dbReference>
<dbReference type="Pfam" id="PF03672">
    <property type="entry name" value="UPF0154"/>
    <property type="match status" value="1"/>
</dbReference>
<feature type="chain" id="PRO_0000214960" description="UPF0154 protein YneF">
    <location>
        <begin position="1"/>
        <end position="72"/>
    </location>
</feature>
<feature type="transmembrane region" description="Helical" evidence="1">
    <location>
        <begin position="4"/>
        <end position="24"/>
    </location>
</feature>
<sequence>MTLWVGILVGVVALLIGVALGFFIARKYMMSYLKKNPPINEQMLRMMMMQMGMKPSQKKINQMMKAMNNQTK</sequence>
<reference key="1">
    <citation type="journal article" date="1997" name="J. Bacteriol.">
        <title>Identification and characterization of the ccdA gene, required for cytochrome c synthesis in Bacillus subtilis.</title>
        <authorList>
            <person name="Schioett T."/>
            <person name="von Wachenfeldt C."/>
            <person name="Hederstedt L."/>
        </authorList>
    </citation>
    <scope>NUCLEOTIDE SEQUENCE [GENOMIC DNA]</scope>
    <source>
        <strain>168</strain>
    </source>
</reference>
<reference key="2">
    <citation type="journal article" date="1996" name="Microbiology">
        <title>New genes in the 170 degrees region of the Bacillus subtilis genome encode DNA gyrase subunits, a thioredoxin, a xylanase and an amino acid transporter.</title>
        <authorList>
            <person name="Rose M."/>
            <person name="Entian K.-D."/>
        </authorList>
    </citation>
    <scope>NUCLEOTIDE SEQUENCE [GENOMIC DNA]</scope>
    <source>
        <strain>168</strain>
    </source>
</reference>
<reference key="3">
    <citation type="journal article" date="1997" name="Nature">
        <title>The complete genome sequence of the Gram-positive bacterium Bacillus subtilis.</title>
        <authorList>
            <person name="Kunst F."/>
            <person name="Ogasawara N."/>
            <person name="Moszer I."/>
            <person name="Albertini A.M."/>
            <person name="Alloni G."/>
            <person name="Azevedo V."/>
            <person name="Bertero M.G."/>
            <person name="Bessieres P."/>
            <person name="Bolotin A."/>
            <person name="Borchert S."/>
            <person name="Borriss R."/>
            <person name="Boursier L."/>
            <person name="Brans A."/>
            <person name="Braun M."/>
            <person name="Brignell S.C."/>
            <person name="Bron S."/>
            <person name="Brouillet S."/>
            <person name="Bruschi C.V."/>
            <person name="Caldwell B."/>
            <person name="Capuano V."/>
            <person name="Carter N.M."/>
            <person name="Choi S.-K."/>
            <person name="Codani J.-J."/>
            <person name="Connerton I.F."/>
            <person name="Cummings N.J."/>
            <person name="Daniel R.A."/>
            <person name="Denizot F."/>
            <person name="Devine K.M."/>
            <person name="Duesterhoeft A."/>
            <person name="Ehrlich S.D."/>
            <person name="Emmerson P.T."/>
            <person name="Entian K.-D."/>
            <person name="Errington J."/>
            <person name="Fabret C."/>
            <person name="Ferrari E."/>
            <person name="Foulger D."/>
            <person name="Fritz C."/>
            <person name="Fujita M."/>
            <person name="Fujita Y."/>
            <person name="Fuma S."/>
            <person name="Galizzi A."/>
            <person name="Galleron N."/>
            <person name="Ghim S.-Y."/>
            <person name="Glaser P."/>
            <person name="Goffeau A."/>
            <person name="Golightly E.J."/>
            <person name="Grandi G."/>
            <person name="Guiseppi G."/>
            <person name="Guy B.J."/>
            <person name="Haga K."/>
            <person name="Haiech J."/>
            <person name="Harwood C.R."/>
            <person name="Henaut A."/>
            <person name="Hilbert H."/>
            <person name="Holsappel S."/>
            <person name="Hosono S."/>
            <person name="Hullo M.-F."/>
            <person name="Itaya M."/>
            <person name="Jones L.-M."/>
            <person name="Joris B."/>
            <person name="Karamata D."/>
            <person name="Kasahara Y."/>
            <person name="Klaerr-Blanchard M."/>
            <person name="Klein C."/>
            <person name="Kobayashi Y."/>
            <person name="Koetter P."/>
            <person name="Koningstein G."/>
            <person name="Krogh S."/>
            <person name="Kumano M."/>
            <person name="Kurita K."/>
            <person name="Lapidus A."/>
            <person name="Lardinois S."/>
            <person name="Lauber J."/>
            <person name="Lazarevic V."/>
            <person name="Lee S.-M."/>
            <person name="Levine A."/>
            <person name="Liu H."/>
            <person name="Masuda S."/>
            <person name="Mauel C."/>
            <person name="Medigue C."/>
            <person name="Medina N."/>
            <person name="Mellado R.P."/>
            <person name="Mizuno M."/>
            <person name="Moestl D."/>
            <person name="Nakai S."/>
            <person name="Noback M."/>
            <person name="Noone D."/>
            <person name="O'Reilly M."/>
            <person name="Ogawa K."/>
            <person name="Ogiwara A."/>
            <person name="Oudega B."/>
            <person name="Park S.-H."/>
            <person name="Parro V."/>
            <person name="Pohl T.M."/>
            <person name="Portetelle D."/>
            <person name="Porwollik S."/>
            <person name="Prescott A.M."/>
            <person name="Presecan E."/>
            <person name="Pujic P."/>
            <person name="Purnelle B."/>
            <person name="Rapoport G."/>
            <person name="Rey M."/>
            <person name="Reynolds S."/>
            <person name="Rieger M."/>
            <person name="Rivolta C."/>
            <person name="Rocha E."/>
            <person name="Roche B."/>
            <person name="Rose M."/>
            <person name="Sadaie Y."/>
            <person name="Sato T."/>
            <person name="Scanlan E."/>
            <person name="Schleich S."/>
            <person name="Schroeter R."/>
            <person name="Scoffone F."/>
            <person name="Sekiguchi J."/>
            <person name="Sekowska A."/>
            <person name="Seror S.J."/>
            <person name="Serror P."/>
            <person name="Shin B.-S."/>
            <person name="Soldo B."/>
            <person name="Sorokin A."/>
            <person name="Tacconi E."/>
            <person name="Takagi T."/>
            <person name="Takahashi H."/>
            <person name="Takemaru K."/>
            <person name="Takeuchi M."/>
            <person name="Tamakoshi A."/>
            <person name="Tanaka T."/>
            <person name="Terpstra P."/>
            <person name="Tognoni A."/>
            <person name="Tosato V."/>
            <person name="Uchiyama S."/>
            <person name="Vandenbol M."/>
            <person name="Vannier F."/>
            <person name="Vassarotti A."/>
            <person name="Viari A."/>
            <person name="Wambutt R."/>
            <person name="Wedler E."/>
            <person name="Wedler H."/>
            <person name="Weitzenegger T."/>
            <person name="Winters P."/>
            <person name="Wipat A."/>
            <person name="Yamamoto H."/>
            <person name="Yamane K."/>
            <person name="Yasumoto K."/>
            <person name="Yata K."/>
            <person name="Yoshida K."/>
            <person name="Yoshikawa H.-F."/>
            <person name="Zumstein E."/>
            <person name="Yoshikawa H."/>
            <person name="Danchin A."/>
        </authorList>
    </citation>
    <scope>NUCLEOTIDE SEQUENCE [LARGE SCALE GENOMIC DNA]</scope>
    <source>
        <strain>168</strain>
    </source>
</reference>
<gene>
    <name type="primary">yneF</name>
    <name type="synonym">yoxG</name>
    <name type="ordered locus">BSU17910</name>
</gene>
<comment type="subcellular location">
    <subcellularLocation>
        <location evidence="2">Membrane</location>
        <topology evidence="2">Single-pass membrane protein</topology>
    </subcellularLocation>
</comment>
<comment type="similarity">
    <text evidence="2">Belongs to the UPF0154 family.</text>
</comment>
<keyword id="KW-0472">Membrane</keyword>
<keyword id="KW-1185">Reference proteome</keyword>
<keyword id="KW-0812">Transmembrane</keyword>
<keyword id="KW-1133">Transmembrane helix</keyword>
<accession>P45708</accession>
<protein>
    <recommendedName>
        <fullName>UPF0154 protein YneF</fullName>
    </recommendedName>
</protein>
<organism>
    <name type="scientific">Bacillus subtilis (strain 168)</name>
    <dbReference type="NCBI Taxonomy" id="224308"/>
    <lineage>
        <taxon>Bacteria</taxon>
        <taxon>Bacillati</taxon>
        <taxon>Bacillota</taxon>
        <taxon>Bacilli</taxon>
        <taxon>Bacillales</taxon>
        <taxon>Bacillaceae</taxon>
        <taxon>Bacillus</taxon>
    </lineage>
</organism>
<evidence type="ECO:0000255" key="1"/>
<evidence type="ECO:0000305" key="2"/>